<protein>
    <recommendedName>
        <fullName evidence="1">Ribulose bisphosphate carboxylase large chain</fullName>
        <shortName evidence="1">RuBisCO large subunit</shortName>
        <ecNumber evidence="1">4.1.1.39</ecNumber>
    </recommendedName>
</protein>
<name>RBL_AREDR</name>
<proteinExistence type="inferred from homology"/>
<accession>P25827</accession>
<feature type="propeptide" id="PRO_0000031121" evidence="1">
    <location>
        <begin position="1"/>
        <end position="2"/>
    </location>
</feature>
<feature type="chain" id="PRO_0000031122" description="Ribulose bisphosphate carboxylase large chain">
    <location>
        <begin position="3"/>
        <end position="476"/>
    </location>
</feature>
<feature type="active site" description="Proton acceptor" evidence="1">
    <location>
        <position position="175"/>
    </location>
</feature>
<feature type="active site" description="Proton acceptor" evidence="1">
    <location>
        <position position="294"/>
    </location>
</feature>
<feature type="binding site" description="in homodimeric partner" evidence="1">
    <location>
        <position position="123"/>
    </location>
    <ligand>
        <name>substrate</name>
    </ligand>
</feature>
<feature type="binding site" evidence="1">
    <location>
        <position position="173"/>
    </location>
    <ligand>
        <name>substrate</name>
    </ligand>
</feature>
<feature type="binding site" evidence="1">
    <location>
        <position position="177"/>
    </location>
    <ligand>
        <name>substrate</name>
    </ligand>
</feature>
<feature type="binding site" description="via carbamate group" evidence="1">
    <location>
        <position position="201"/>
    </location>
    <ligand>
        <name>Mg(2+)</name>
        <dbReference type="ChEBI" id="CHEBI:18420"/>
    </ligand>
</feature>
<feature type="binding site" evidence="1">
    <location>
        <position position="203"/>
    </location>
    <ligand>
        <name>Mg(2+)</name>
        <dbReference type="ChEBI" id="CHEBI:18420"/>
    </ligand>
</feature>
<feature type="binding site" evidence="1">
    <location>
        <position position="204"/>
    </location>
    <ligand>
        <name>Mg(2+)</name>
        <dbReference type="ChEBI" id="CHEBI:18420"/>
    </ligand>
</feature>
<feature type="binding site" evidence="1">
    <location>
        <position position="295"/>
    </location>
    <ligand>
        <name>substrate</name>
    </ligand>
</feature>
<feature type="binding site" evidence="1">
    <location>
        <position position="327"/>
    </location>
    <ligand>
        <name>substrate</name>
    </ligand>
</feature>
<feature type="binding site" evidence="1">
    <location>
        <position position="379"/>
    </location>
    <ligand>
        <name>substrate</name>
    </ligand>
</feature>
<feature type="site" description="Transition state stabilizer" evidence="1">
    <location>
        <position position="334"/>
    </location>
</feature>
<feature type="modified residue" description="N-acetylproline" evidence="1">
    <location>
        <position position="3"/>
    </location>
</feature>
<feature type="modified residue" description="N6,N6,N6-trimethyllysine" evidence="1">
    <location>
        <position position="14"/>
    </location>
</feature>
<feature type="modified residue" description="N6-carboxylysine" evidence="1">
    <location>
        <position position="201"/>
    </location>
</feature>
<feature type="disulfide bond" description="Interchain; in linked form" evidence="1">
    <location>
        <position position="247"/>
    </location>
</feature>
<keyword id="KW-0007">Acetylation</keyword>
<keyword id="KW-0113">Calvin cycle</keyword>
<keyword id="KW-0120">Carbon dioxide fixation</keyword>
<keyword id="KW-0150">Chloroplast</keyword>
<keyword id="KW-1015">Disulfide bond</keyword>
<keyword id="KW-0456">Lyase</keyword>
<keyword id="KW-0460">Magnesium</keyword>
<keyword id="KW-0479">Metal-binding</keyword>
<keyword id="KW-0488">Methylation</keyword>
<keyword id="KW-0503">Monooxygenase</keyword>
<keyword id="KW-0560">Oxidoreductase</keyword>
<keyword id="KW-0601">Photorespiration</keyword>
<keyword id="KW-0602">Photosynthesis</keyword>
<keyword id="KW-0934">Plastid</keyword>
<gene>
    <name evidence="1" type="primary">rbcL</name>
</gene>
<comment type="function">
    <text evidence="1">RuBisCO catalyzes two reactions: the carboxylation of D-ribulose 1,5-bisphosphate, the primary event in carbon dioxide fixation, as well as the oxidative fragmentation of the pentose substrate in the photorespiration process. Both reactions occur simultaneously and in competition at the same active site.</text>
</comment>
<comment type="catalytic activity">
    <reaction evidence="1">
        <text>2 (2R)-3-phosphoglycerate + 2 H(+) = D-ribulose 1,5-bisphosphate + CO2 + H2O</text>
        <dbReference type="Rhea" id="RHEA:23124"/>
        <dbReference type="ChEBI" id="CHEBI:15377"/>
        <dbReference type="ChEBI" id="CHEBI:15378"/>
        <dbReference type="ChEBI" id="CHEBI:16526"/>
        <dbReference type="ChEBI" id="CHEBI:57870"/>
        <dbReference type="ChEBI" id="CHEBI:58272"/>
        <dbReference type="EC" id="4.1.1.39"/>
    </reaction>
</comment>
<comment type="catalytic activity">
    <reaction evidence="1">
        <text>D-ribulose 1,5-bisphosphate + O2 = 2-phosphoglycolate + (2R)-3-phosphoglycerate + 2 H(+)</text>
        <dbReference type="Rhea" id="RHEA:36631"/>
        <dbReference type="ChEBI" id="CHEBI:15378"/>
        <dbReference type="ChEBI" id="CHEBI:15379"/>
        <dbReference type="ChEBI" id="CHEBI:57870"/>
        <dbReference type="ChEBI" id="CHEBI:58033"/>
        <dbReference type="ChEBI" id="CHEBI:58272"/>
    </reaction>
</comment>
<comment type="cofactor">
    <cofactor evidence="1">
        <name>Mg(2+)</name>
        <dbReference type="ChEBI" id="CHEBI:18420"/>
    </cofactor>
    <text evidence="1">Binds 1 Mg(2+) ion per subunit.</text>
</comment>
<comment type="subunit">
    <text evidence="1">Heterohexadecamer of 8 large chains and 8 small chains; disulfide-linked. The disulfide link is formed within the large subunit homodimers.</text>
</comment>
<comment type="subcellular location">
    <subcellularLocation>
        <location>Plastid</location>
        <location>Chloroplast</location>
    </subcellularLocation>
</comment>
<comment type="PTM">
    <text evidence="1">The disulfide bond which can form in the large chain dimeric partners within the hexadecamer appears to be associated with oxidative stress and protein turnover.</text>
</comment>
<comment type="miscellaneous">
    <text evidence="1">The basic functional RuBisCO is composed of a large chain homodimer in a 'head-to-tail' conformation. In form I RuBisCO this homodimer is arranged in a barrel-like tetramer with the small subunits forming a tetrameric 'cap' on each end of the 'barrel'.</text>
</comment>
<comment type="similarity">
    <text evidence="1">Belongs to the RuBisCO large chain family. Type I subfamily.</text>
</comment>
<sequence>MSPQTETKASVGFKAGVKDYKLTYYTPDYETLDTDILAAFRVTPQPGVPAEEAGAAVAAESSTGTWTTVWTDGLTSLDRYKGRCYHIEPVAGDENQYICYVAYPLDLFEEGSVTNMFTSIVGNVFGFKALRALRLEDLRIPVAYIKTFLGPPHGIQVERDKLNKYGRPLLGCTIKPKLGLSAKNYGRAVYECLRGGLDFTKDDENVNSQPFMRWRDRFLFCAEAINKAQAETGEIKGHYLNATAGTCEEMIKRAVFARELGVPIVMHDYITGGFTANTSLAHYCRDNGLLLHIHRAMHAVIDRQKNHGMHFRVLAKALRLSGGDHIHSGTVVGKLEGERDITLGFVDLLRDDFTEKDRSRGIYFTQSWVSTPGVLPVASGGIHVWHMPALTEIFGDDSVLQFGGGTLGHPWGNAPGAVANRVALEACVQARNEGRDLAREGNTIIREACKWSPELAAACEVWKEIKFEFQAMDTID</sequence>
<organism>
    <name type="scientific">Arenaria drummondii</name>
    <name type="common">Drummond sandwort</name>
    <dbReference type="NCBI Taxonomy" id="3578"/>
    <lineage>
        <taxon>Eukaryota</taxon>
        <taxon>Viridiplantae</taxon>
        <taxon>Streptophyta</taxon>
        <taxon>Embryophyta</taxon>
        <taxon>Tracheophyta</taxon>
        <taxon>Spermatophyta</taxon>
        <taxon>Magnoliopsida</taxon>
        <taxon>eudicotyledons</taxon>
        <taxon>Gunneridae</taxon>
        <taxon>Pentapetalae</taxon>
        <taxon>Caryophyllales</taxon>
        <taxon>Caryophyllaceae</taxon>
        <taxon>Arenarieae</taxon>
        <taxon>Arenaria</taxon>
    </lineage>
</organism>
<dbReference type="EC" id="4.1.1.39" evidence="1"/>
<dbReference type="EMBL" id="M83541">
    <property type="protein sequence ID" value="AAA84023.1"/>
    <property type="molecule type" value="Genomic_DNA"/>
</dbReference>
<dbReference type="SMR" id="P25827"/>
<dbReference type="GO" id="GO:0009507">
    <property type="term" value="C:chloroplast"/>
    <property type="evidence" value="ECO:0007669"/>
    <property type="project" value="UniProtKB-SubCell"/>
</dbReference>
<dbReference type="GO" id="GO:0000287">
    <property type="term" value="F:magnesium ion binding"/>
    <property type="evidence" value="ECO:0007669"/>
    <property type="project" value="UniProtKB-UniRule"/>
</dbReference>
<dbReference type="GO" id="GO:0004497">
    <property type="term" value="F:monooxygenase activity"/>
    <property type="evidence" value="ECO:0007669"/>
    <property type="project" value="UniProtKB-KW"/>
</dbReference>
<dbReference type="GO" id="GO:0016984">
    <property type="term" value="F:ribulose-bisphosphate carboxylase activity"/>
    <property type="evidence" value="ECO:0007669"/>
    <property type="project" value="UniProtKB-UniRule"/>
</dbReference>
<dbReference type="GO" id="GO:0009853">
    <property type="term" value="P:photorespiration"/>
    <property type="evidence" value="ECO:0007669"/>
    <property type="project" value="UniProtKB-KW"/>
</dbReference>
<dbReference type="GO" id="GO:0019253">
    <property type="term" value="P:reductive pentose-phosphate cycle"/>
    <property type="evidence" value="ECO:0007669"/>
    <property type="project" value="UniProtKB-UniRule"/>
</dbReference>
<dbReference type="CDD" id="cd08212">
    <property type="entry name" value="RuBisCO_large_I"/>
    <property type="match status" value="1"/>
</dbReference>
<dbReference type="FunFam" id="3.20.20.110:FF:000001">
    <property type="entry name" value="Ribulose bisphosphate carboxylase large chain"/>
    <property type="match status" value="1"/>
</dbReference>
<dbReference type="FunFam" id="3.30.70.150:FF:000001">
    <property type="entry name" value="Ribulose bisphosphate carboxylase large chain"/>
    <property type="match status" value="1"/>
</dbReference>
<dbReference type="Gene3D" id="3.20.20.110">
    <property type="entry name" value="Ribulose bisphosphate carboxylase, large subunit, C-terminal domain"/>
    <property type="match status" value="1"/>
</dbReference>
<dbReference type="Gene3D" id="3.30.70.150">
    <property type="entry name" value="RuBisCO large subunit, N-terminal domain"/>
    <property type="match status" value="1"/>
</dbReference>
<dbReference type="HAMAP" id="MF_01338">
    <property type="entry name" value="RuBisCO_L_type1"/>
    <property type="match status" value="1"/>
</dbReference>
<dbReference type="InterPro" id="IPR033966">
    <property type="entry name" value="RuBisCO"/>
</dbReference>
<dbReference type="InterPro" id="IPR020878">
    <property type="entry name" value="RuBisCo_large_chain_AS"/>
</dbReference>
<dbReference type="InterPro" id="IPR000685">
    <property type="entry name" value="RuBisCO_lsu_C"/>
</dbReference>
<dbReference type="InterPro" id="IPR036376">
    <property type="entry name" value="RuBisCO_lsu_C_sf"/>
</dbReference>
<dbReference type="InterPro" id="IPR017443">
    <property type="entry name" value="RuBisCO_lsu_fd_N"/>
</dbReference>
<dbReference type="InterPro" id="IPR036422">
    <property type="entry name" value="RuBisCO_lsu_N_sf"/>
</dbReference>
<dbReference type="InterPro" id="IPR020888">
    <property type="entry name" value="RuBisCO_lsuI"/>
</dbReference>
<dbReference type="NCBIfam" id="NF003252">
    <property type="entry name" value="PRK04208.1"/>
    <property type="match status" value="1"/>
</dbReference>
<dbReference type="PANTHER" id="PTHR42704">
    <property type="entry name" value="RIBULOSE BISPHOSPHATE CARBOXYLASE"/>
    <property type="match status" value="1"/>
</dbReference>
<dbReference type="PANTHER" id="PTHR42704:SF15">
    <property type="entry name" value="RIBULOSE BISPHOSPHATE CARBOXYLASE LARGE CHAIN"/>
    <property type="match status" value="1"/>
</dbReference>
<dbReference type="Pfam" id="PF00016">
    <property type="entry name" value="RuBisCO_large"/>
    <property type="match status" value="1"/>
</dbReference>
<dbReference type="Pfam" id="PF02788">
    <property type="entry name" value="RuBisCO_large_N"/>
    <property type="match status" value="1"/>
</dbReference>
<dbReference type="SFLD" id="SFLDG01052">
    <property type="entry name" value="RuBisCO"/>
    <property type="match status" value="1"/>
</dbReference>
<dbReference type="SFLD" id="SFLDS00014">
    <property type="entry name" value="RuBisCO"/>
    <property type="match status" value="1"/>
</dbReference>
<dbReference type="SFLD" id="SFLDG00301">
    <property type="entry name" value="RuBisCO-like_proteins"/>
    <property type="match status" value="1"/>
</dbReference>
<dbReference type="SUPFAM" id="SSF51649">
    <property type="entry name" value="RuBisCo, C-terminal domain"/>
    <property type="match status" value="1"/>
</dbReference>
<dbReference type="SUPFAM" id="SSF54966">
    <property type="entry name" value="RuBisCO, large subunit, small (N-terminal) domain"/>
    <property type="match status" value="1"/>
</dbReference>
<dbReference type="PROSITE" id="PS00157">
    <property type="entry name" value="RUBISCO_LARGE"/>
    <property type="match status" value="1"/>
</dbReference>
<evidence type="ECO:0000255" key="1">
    <source>
        <dbReference type="HAMAP-Rule" id="MF_01338"/>
    </source>
</evidence>
<geneLocation type="chloroplast"/>
<reference key="1">
    <citation type="submission" date="1992-02" db="EMBL/GenBank/DDBJ databases">
        <title>Phylogeny of the Caryophyllales.</title>
        <authorList>
            <person name="Manhart J.R."/>
            <person name="Hugh J.H."/>
            <person name="Wilson D."/>
        </authorList>
    </citation>
    <scope>NUCLEOTIDE SEQUENCE [GENOMIC DNA]</scope>
</reference>